<organism>
    <name type="scientific">Pardachirus marmoratus</name>
    <name type="common">Finless sole</name>
    <name type="synonym">Achirus marmoratus</name>
    <dbReference type="NCBI Taxonomy" id="31087"/>
    <lineage>
        <taxon>Eukaryota</taxon>
        <taxon>Metazoa</taxon>
        <taxon>Chordata</taxon>
        <taxon>Craniata</taxon>
        <taxon>Vertebrata</taxon>
        <taxon>Euteleostomi</taxon>
        <taxon>Actinopterygii</taxon>
        <taxon>Neopterygii</taxon>
        <taxon>Teleostei</taxon>
        <taxon>Neoteleostei</taxon>
        <taxon>Acanthomorphata</taxon>
        <taxon>Carangaria</taxon>
        <taxon>Pleuronectiformes</taxon>
        <taxon>Pleuronectoidei</taxon>
        <taxon>Soleidae</taxon>
        <taxon>Pardachirus</taxon>
    </lineage>
</organism>
<sequence length="5" mass="614">GFFFP</sequence>
<comment type="function">
    <text>Exhibits unusual shark repellent and surfactant properties. Forms voltage-dependent, ion-permeable channels in membranes. At high concentration causes cell membrane lysis.</text>
</comment>
<comment type="subunit">
    <text>Monomer. In aqueous solution exists as a tetramer.</text>
</comment>
<comment type="subcellular location">
    <subcellularLocation>
        <location>Secreted</location>
    </subcellularLocation>
    <subcellularLocation>
        <location>Target cell membrane</location>
    </subcellularLocation>
    <text>Forms a helical membrane channel in the prey.</text>
</comment>
<comment type="similarity">
    <text evidence="1">Belongs to the pardaxin family.</text>
</comment>
<keyword id="KW-0903">Direct protein sequencing</keyword>
<keyword id="KW-0406">Ion transport</keyword>
<keyword id="KW-0472">Membrane</keyword>
<keyword id="KW-0964">Secreted</keyword>
<keyword id="KW-1052">Target cell membrane</keyword>
<keyword id="KW-1053">Target membrane</keyword>
<keyword id="KW-0800">Toxin</keyword>
<keyword id="KW-0812">Transmembrane</keyword>
<keyword id="KW-0813">Transport</keyword>
<proteinExistence type="evidence at protein level"/>
<dbReference type="GO" id="GO:0005576">
    <property type="term" value="C:extracellular region"/>
    <property type="evidence" value="ECO:0007669"/>
    <property type="project" value="UniProtKB-SubCell"/>
</dbReference>
<dbReference type="GO" id="GO:0016020">
    <property type="term" value="C:membrane"/>
    <property type="evidence" value="ECO:0007669"/>
    <property type="project" value="UniProtKB-KW"/>
</dbReference>
<dbReference type="GO" id="GO:0044218">
    <property type="term" value="C:other organism cell membrane"/>
    <property type="evidence" value="ECO:0007669"/>
    <property type="project" value="UniProtKB-KW"/>
</dbReference>
<dbReference type="GO" id="GO:0090729">
    <property type="term" value="F:toxin activity"/>
    <property type="evidence" value="ECO:0007669"/>
    <property type="project" value="UniProtKB-KW"/>
</dbReference>
<dbReference type="GO" id="GO:0006811">
    <property type="term" value="P:monoatomic ion transport"/>
    <property type="evidence" value="ECO:0007669"/>
    <property type="project" value="UniProtKB-KW"/>
</dbReference>
<evidence type="ECO:0000305" key="1"/>
<reference key="1">
    <citation type="journal article" date="1986" name="J. Biol. Chem.">
        <title>Purification and pore-forming activity of two hydrophobic polypeptides from the secretion of the Red sea moses sole (Pardachirus marmoratus).</title>
        <authorList>
            <person name="Lazarovici P."/>
            <person name="Primor N."/>
            <person name="Loew L.M."/>
        </authorList>
    </citation>
    <scope>PROTEIN SEQUENCE</scope>
    <source>
        <tissue>Skin secretion</tissue>
    </source>
</reference>
<name>PAP2_PARMA</name>
<accession>P81864</accession>
<protein>
    <recommendedName>
        <fullName>Pardaxin-2</fullName>
    </recommendedName>
    <alternativeName>
        <fullName>Pardaxin II</fullName>
        <shortName>PXII</shortName>
    </alternativeName>
</protein>
<feature type="peptide" id="PRO_0000045113" description="Pardaxin-2">
    <location>
        <begin position="1"/>
        <end position="5" status="greater than"/>
    </location>
</feature>
<feature type="non-terminal residue">
    <location>
        <position position="5"/>
    </location>
</feature>